<accession>Q2MI90</accession>
<name>PSAI_SOLLC</name>
<organism>
    <name type="scientific">Solanum lycopersicum</name>
    <name type="common">Tomato</name>
    <name type="synonym">Lycopersicon esculentum</name>
    <dbReference type="NCBI Taxonomy" id="4081"/>
    <lineage>
        <taxon>Eukaryota</taxon>
        <taxon>Viridiplantae</taxon>
        <taxon>Streptophyta</taxon>
        <taxon>Embryophyta</taxon>
        <taxon>Tracheophyta</taxon>
        <taxon>Spermatophyta</taxon>
        <taxon>Magnoliopsida</taxon>
        <taxon>eudicotyledons</taxon>
        <taxon>Gunneridae</taxon>
        <taxon>Pentapetalae</taxon>
        <taxon>asterids</taxon>
        <taxon>lamiids</taxon>
        <taxon>Solanales</taxon>
        <taxon>Solanaceae</taxon>
        <taxon>Solanoideae</taxon>
        <taxon>Solaneae</taxon>
        <taxon>Solanum</taxon>
        <taxon>Solanum subgen. Lycopersicon</taxon>
    </lineage>
</organism>
<dbReference type="EMBL" id="DQ347959">
    <property type="protein sequence ID" value="ABC56310.1"/>
    <property type="molecule type" value="Genomic_DNA"/>
</dbReference>
<dbReference type="EMBL" id="AM087200">
    <property type="protein sequence ID" value="CAJ32403.1"/>
    <property type="molecule type" value="Genomic_DNA"/>
</dbReference>
<dbReference type="RefSeq" id="AP_004938.1">
    <property type="nucleotide sequence ID" value="AC_000188.1"/>
</dbReference>
<dbReference type="RefSeq" id="YP_008563098.1">
    <property type="nucleotide sequence ID" value="NC_007898.3"/>
</dbReference>
<dbReference type="SMR" id="Q2MI90"/>
<dbReference type="FunCoup" id="Q2MI90">
    <property type="interactions" value="19"/>
</dbReference>
<dbReference type="STRING" id="4081.Q2MI90"/>
<dbReference type="PaxDb" id="4081-Solyc01g007350.2.1"/>
<dbReference type="GeneID" id="3950462"/>
<dbReference type="KEGG" id="sly:3950462"/>
<dbReference type="eggNOG" id="ENOG502SE4W">
    <property type="taxonomic scope" value="Eukaryota"/>
</dbReference>
<dbReference type="InParanoid" id="Q2MI90"/>
<dbReference type="OrthoDB" id="970998at2759"/>
<dbReference type="Proteomes" id="UP000004994">
    <property type="component" value="Chloroplast"/>
</dbReference>
<dbReference type="GO" id="GO:0009535">
    <property type="term" value="C:chloroplast thylakoid membrane"/>
    <property type="evidence" value="ECO:0007669"/>
    <property type="project" value="UniProtKB-SubCell"/>
</dbReference>
<dbReference type="GO" id="GO:0009522">
    <property type="term" value="C:photosystem I"/>
    <property type="evidence" value="ECO:0007669"/>
    <property type="project" value="UniProtKB-KW"/>
</dbReference>
<dbReference type="GO" id="GO:0015979">
    <property type="term" value="P:photosynthesis"/>
    <property type="evidence" value="ECO:0007669"/>
    <property type="project" value="UniProtKB-UniRule"/>
</dbReference>
<dbReference type="HAMAP" id="MF_00431">
    <property type="entry name" value="PSI_PsaI"/>
    <property type="match status" value="1"/>
</dbReference>
<dbReference type="InterPro" id="IPR001302">
    <property type="entry name" value="PSI_PsaI"/>
</dbReference>
<dbReference type="InterPro" id="IPR036357">
    <property type="entry name" value="PSI_PsaI_sf"/>
</dbReference>
<dbReference type="NCBIfam" id="TIGR03052">
    <property type="entry name" value="PS_I_psaI"/>
    <property type="match status" value="1"/>
</dbReference>
<dbReference type="PANTHER" id="PTHR35775">
    <property type="match status" value="1"/>
</dbReference>
<dbReference type="PANTHER" id="PTHR35775:SF2">
    <property type="entry name" value="PHOTOSYSTEM I REACTION CENTER SUBUNIT VIII"/>
    <property type="match status" value="1"/>
</dbReference>
<dbReference type="Pfam" id="PF00796">
    <property type="entry name" value="PSI_8"/>
    <property type="match status" value="1"/>
</dbReference>
<dbReference type="SUPFAM" id="SSF81540">
    <property type="entry name" value="Subunit VIII of photosystem I reaction centre, PsaI"/>
    <property type="match status" value="1"/>
</dbReference>
<sequence length="36" mass="3937">MTNLNLPSIFVPLVGLVFPAIAMASLFLHVQKNKIV</sequence>
<proteinExistence type="inferred from homology"/>
<comment type="function">
    <text evidence="1">May help in the organization of the PsaL subunit.</text>
</comment>
<comment type="subcellular location">
    <subcellularLocation>
        <location evidence="1">Plastid</location>
        <location evidence="1">Chloroplast thylakoid membrane</location>
        <topology evidence="1">Single-pass membrane protein</topology>
    </subcellularLocation>
</comment>
<comment type="similarity">
    <text evidence="1">Belongs to the PsaI family.</text>
</comment>
<reference key="1">
    <citation type="journal article" date="2006" name="Theor. Appl. Genet.">
        <title>Complete chloroplast genome sequences of Solanum bulbocastanum, Solanum lycopersicum and comparative analyses with other Solanaceae genomes.</title>
        <authorList>
            <person name="Daniell H."/>
            <person name="Lee S.-B."/>
            <person name="Grevich J."/>
            <person name="Saski C."/>
            <person name="Quesada-Vargas T."/>
            <person name="Guda C."/>
            <person name="Tomkins J."/>
            <person name="Jansen R.K."/>
        </authorList>
    </citation>
    <scope>NUCLEOTIDE SEQUENCE [LARGE SCALE GENOMIC DNA]</scope>
    <source>
        <strain>cv. LA3023</strain>
    </source>
</reference>
<reference key="2">
    <citation type="journal article" date="2006" name="J. Mol. Evol.">
        <title>Sequence of the tomato chloroplast DNA and evolutionary comparison of solanaceous plastid genomes.</title>
        <authorList>
            <person name="Kahlau S."/>
            <person name="Aspinall S."/>
            <person name="Gray J.C."/>
            <person name="Bock R."/>
        </authorList>
    </citation>
    <scope>NUCLEOTIDE SEQUENCE [LARGE SCALE GENOMIC DNA]</scope>
    <source>
        <strain>cv. IPA-6</strain>
    </source>
</reference>
<evidence type="ECO:0000255" key="1">
    <source>
        <dbReference type="HAMAP-Rule" id="MF_00431"/>
    </source>
</evidence>
<geneLocation type="chloroplast"/>
<gene>
    <name evidence="1" type="primary">psaI</name>
</gene>
<protein>
    <recommendedName>
        <fullName evidence="1">Photosystem I reaction center subunit VIII</fullName>
        <shortName evidence="1">PSI-I</shortName>
    </recommendedName>
</protein>
<keyword id="KW-0150">Chloroplast</keyword>
<keyword id="KW-0472">Membrane</keyword>
<keyword id="KW-0602">Photosynthesis</keyword>
<keyword id="KW-0603">Photosystem I</keyword>
<keyword id="KW-0934">Plastid</keyword>
<keyword id="KW-1185">Reference proteome</keyword>
<keyword id="KW-0793">Thylakoid</keyword>
<keyword id="KW-0812">Transmembrane</keyword>
<keyword id="KW-1133">Transmembrane helix</keyword>
<feature type="chain" id="PRO_0000276038" description="Photosystem I reaction center subunit VIII">
    <location>
        <begin position="1"/>
        <end position="36"/>
    </location>
</feature>
<feature type="transmembrane region" description="Helical" evidence="1">
    <location>
        <begin position="8"/>
        <end position="28"/>
    </location>
</feature>